<dbReference type="EC" id="4.4.1.15" evidence="2"/>
<dbReference type="EMBL" id="AE014075">
    <property type="protein sequence ID" value="AAN80792.1"/>
    <property type="molecule type" value="Genomic_DNA"/>
</dbReference>
<dbReference type="RefSeq" id="WP_001128236.1">
    <property type="nucleotide sequence ID" value="NZ_CP051263.1"/>
</dbReference>
<dbReference type="SMR" id="P59329"/>
<dbReference type="STRING" id="199310.c2333"/>
<dbReference type="KEGG" id="ecc:c2333"/>
<dbReference type="eggNOG" id="COG2515">
    <property type="taxonomic scope" value="Bacteria"/>
</dbReference>
<dbReference type="HOGENOM" id="CLU_048897_1_0_6"/>
<dbReference type="BioCyc" id="ECOL199310:C2333-MONOMER"/>
<dbReference type="Proteomes" id="UP000001410">
    <property type="component" value="Chromosome"/>
</dbReference>
<dbReference type="GO" id="GO:0019148">
    <property type="term" value="F:D-cysteine desulfhydrase activity"/>
    <property type="evidence" value="ECO:0007669"/>
    <property type="project" value="UniProtKB-UniRule"/>
</dbReference>
<dbReference type="GO" id="GO:0046416">
    <property type="term" value="P:D-amino acid metabolic process"/>
    <property type="evidence" value="ECO:0007669"/>
    <property type="project" value="UniProtKB-UniRule"/>
</dbReference>
<dbReference type="CDD" id="cd06449">
    <property type="entry name" value="ACCD"/>
    <property type="match status" value="1"/>
</dbReference>
<dbReference type="FunFam" id="3.40.50.1100:FF:000019">
    <property type="entry name" value="D-cysteine desulfhydrase"/>
    <property type="match status" value="1"/>
</dbReference>
<dbReference type="Gene3D" id="3.40.50.1100">
    <property type="match status" value="2"/>
</dbReference>
<dbReference type="HAMAP" id="MF_01045">
    <property type="entry name" value="D_Cys_desulfhydr"/>
    <property type="match status" value="1"/>
</dbReference>
<dbReference type="InterPro" id="IPR027278">
    <property type="entry name" value="ACCD_DCysDesulf"/>
</dbReference>
<dbReference type="InterPro" id="IPR005966">
    <property type="entry name" value="D-Cys_desShydrase"/>
</dbReference>
<dbReference type="InterPro" id="IPR023702">
    <property type="entry name" value="D_Cys_desulphydr_bac"/>
</dbReference>
<dbReference type="InterPro" id="IPR001926">
    <property type="entry name" value="TrpB-like_PALP"/>
</dbReference>
<dbReference type="InterPro" id="IPR036052">
    <property type="entry name" value="TrpB-like_PALP_sf"/>
</dbReference>
<dbReference type="NCBIfam" id="TIGR01275">
    <property type="entry name" value="ACC_deam_rel"/>
    <property type="match status" value="1"/>
</dbReference>
<dbReference type="NCBIfam" id="NF003029">
    <property type="entry name" value="PRK03910.1-1"/>
    <property type="match status" value="1"/>
</dbReference>
<dbReference type="NCBIfam" id="NF003030">
    <property type="entry name" value="PRK03910.1-3"/>
    <property type="match status" value="1"/>
</dbReference>
<dbReference type="NCBIfam" id="NF003032">
    <property type="entry name" value="PRK03910.1-5"/>
    <property type="match status" value="1"/>
</dbReference>
<dbReference type="PANTHER" id="PTHR43780">
    <property type="entry name" value="1-AMINOCYCLOPROPANE-1-CARBOXYLATE DEAMINASE-RELATED"/>
    <property type="match status" value="1"/>
</dbReference>
<dbReference type="PANTHER" id="PTHR43780:SF2">
    <property type="entry name" value="1-AMINOCYCLOPROPANE-1-CARBOXYLATE DEAMINASE-RELATED"/>
    <property type="match status" value="1"/>
</dbReference>
<dbReference type="Pfam" id="PF00291">
    <property type="entry name" value="PALP"/>
    <property type="match status" value="1"/>
</dbReference>
<dbReference type="PIRSF" id="PIRSF006278">
    <property type="entry name" value="ACCD_DCysDesulf"/>
    <property type="match status" value="1"/>
</dbReference>
<dbReference type="SUPFAM" id="SSF53686">
    <property type="entry name" value="Tryptophan synthase beta subunit-like PLP-dependent enzymes"/>
    <property type="match status" value="1"/>
</dbReference>
<sequence length="328" mass="35123">MPLHNLTRFPRLEFIGAPTPLEYLPRFSDYLGREIFIKRDDVTPMAMGGNKLRKLEFLAADALREGADTLITAGAIQSNHVRQTAAVAAKLGLHCVALLENPIGTTAENYLTNGNRLLLDLFNTQIEMCDALTDPNAQLEVLATRVEAQGFRPYVIPVGGSNALGALGYVESALEIAQQCEGAVNISSVVVASGSAGTHAGLAVGLEHLMPESELIGVTVSRSVADQLPKVVNLQQAIAKELELTASAEILLWDDYFAPGYGVPNDEGMEAVKLLARLEGILLDPVYTGKAMAGLIDGISQKRFKDEGPILFIHTGGAPALFAYHPHV</sequence>
<reference key="1">
    <citation type="journal article" date="2002" name="Proc. Natl. Acad. Sci. U.S.A.">
        <title>Extensive mosaic structure revealed by the complete genome sequence of uropathogenic Escherichia coli.</title>
        <authorList>
            <person name="Welch R.A."/>
            <person name="Burland V."/>
            <person name="Plunkett G. III"/>
            <person name="Redford P."/>
            <person name="Roesch P."/>
            <person name="Rasko D."/>
            <person name="Buckles E.L."/>
            <person name="Liou S.-R."/>
            <person name="Boutin A."/>
            <person name="Hackett J."/>
            <person name="Stroud D."/>
            <person name="Mayhew G.F."/>
            <person name="Rose D.J."/>
            <person name="Zhou S."/>
            <person name="Schwartz D.C."/>
            <person name="Perna N.T."/>
            <person name="Mobley H.L.T."/>
            <person name="Donnenberg M.S."/>
            <person name="Blattner F.R."/>
        </authorList>
    </citation>
    <scope>NUCLEOTIDE SEQUENCE [LARGE SCALE GENOMIC DNA]</scope>
    <source>
        <strain>CFT073 / ATCC 700928 / UPEC</strain>
    </source>
</reference>
<organism>
    <name type="scientific">Escherichia coli O6:H1 (strain CFT073 / ATCC 700928 / UPEC)</name>
    <dbReference type="NCBI Taxonomy" id="199310"/>
    <lineage>
        <taxon>Bacteria</taxon>
        <taxon>Pseudomonadati</taxon>
        <taxon>Pseudomonadota</taxon>
        <taxon>Gammaproteobacteria</taxon>
        <taxon>Enterobacterales</taxon>
        <taxon>Enterobacteriaceae</taxon>
        <taxon>Escherichia</taxon>
    </lineage>
</organism>
<gene>
    <name evidence="2" type="primary">dcyD</name>
    <name type="ordered locus">c2333</name>
</gene>
<evidence type="ECO:0000250" key="1"/>
<evidence type="ECO:0000255" key="2">
    <source>
        <dbReference type="HAMAP-Rule" id="MF_01045"/>
    </source>
</evidence>
<protein>
    <recommendedName>
        <fullName evidence="2">D-cysteine desulfhydrase</fullName>
        <ecNumber evidence="2">4.4.1.15</ecNumber>
    </recommendedName>
</protein>
<keyword id="KW-0456">Lyase</keyword>
<keyword id="KW-0663">Pyridoxal phosphate</keyword>
<keyword id="KW-1185">Reference proteome</keyword>
<feature type="initiator methionine" description="Removed" evidence="1">
    <location>
        <position position="1"/>
    </location>
</feature>
<feature type="chain" id="PRO_0000184514" description="D-cysteine desulfhydrase">
    <location>
        <begin position="2"/>
        <end position="328"/>
    </location>
</feature>
<feature type="modified residue" description="N6-(pyridoxal phosphate)lysine" evidence="2">
    <location>
        <position position="51"/>
    </location>
</feature>
<proteinExistence type="inferred from homology"/>
<name>DCYD_ECOL6</name>
<comment type="function">
    <text evidence="2">Catalyzes the alpha,beta-elimination reaction of D-cysteine and of several D-cysteine derivatives. It could be a defense mechanism against D-cysteine.</text>
</comment>
<comment type="catalytic activity">
    <reaction evidence="2">
        <text>D-cysteine + H2O = hydrogen sulfide + pyruvate + NH4(+) + H(+)</text>
        <dbReference type="Rhea" id="RHEA:11268"/>
        <dbReference type="ChEBI" id="CHEBI:15361"/>
        <dbReference type="ChEBI" id="CHEBI:15377"/>
        <dbReference type="ChEBI" id="CHEBI:15378"/>
        <dbReference type="ChEBI" id="CHEBI:28938"/>
        <dbReference type="ChEBI" id="CHEBI:29919"/>
        <dbReference type="ChEBI" id="CHEBI:35236"/>
        <dbReference type="EC" id="4.4.1.15"/>
    </reaction>
</comment>
<comment type="cofactor">
    <cofactor evidence="2">
        <name>pyridoxal 5'-phosphate</name>
        <dbReference type="ChEBI" id="CHEBI:597326"/>
    </cofactor>
</comment>
<comment type="subunit">
    <text evidence="2">Homodimer.</text>
</comment>
<comment type="similarity">
    <text evidence="2">Belongs to the ACC deaminase/D-cysteine desulfhydrase family.</text>
</comment>
<accession>P59329</accession>